<evidence type="ECO:0000255" key="1">
    <source>
        <dbReference type="HAMAP-Rule" id="MF_00121"/>
    </source>
</evidence>
<sequence>MTQWEVVIGLETHAQLSTVSKIFSGASTQFGAQPNTQACPVDLALPGVLPVLNRGAVERAIRFGLAIGATVAPRSVFARKNYFYPDLPKGYQISQYEIPVVQGGQITIQVPANEKAGKQAYSKTVNLTRAHLEEDAGKSLHEDFAGMTGIDLNRAGTPLLEIVTEPEMRSAAEAVAYAKALHGLVMWLGICDGNMQEGSFRCDANVSVRPVGQEKFGTRAEIKNLNSFRFLEDAINYEVRRQIELIEDGGEVVQETRLYDPDKRETRSMRSKEDAHDYRYFPDPDLMPLVIGADWIARVKGEMPELPAVMQQRFIEQYGVSAYDAGVLTSTKAMAEYFEALVAKAGAANAKLAANWLMGDVSSQLNRDGIDIDACPVSAAQLALVLQRIADGTISNKIAKEIFVTIWDEKAADEGAADRIIEAKGLKQISDTGALEAIIDEVLAANAKSVEEFRAGKDKAFNALVGQAMKATKGKANPQQVNELLKKKLG</sequence>
<keyword id="KW-0067">ATP-binding</keyword>
<keyword id="KW-0436">Ligase</keyword>
<keyword id="KW-0547">Nucleotide-binding</keyword>
<keyword id="KW-0648">Protein biosynthesis</keyword>
<proteinExistence type="inferred from homology"/>
<comment type="function">
    <text evidence="1">Allows the formation of correctly charged Asn-tRNA(Asn) or Gln-tRNA(Gln) through the transamidation of misacylated Asp-tRNA(Asn) or Glu-tRNA(Gln) in organisms which lack either or both of asparaginyl-tRNA or glutaminyl-tRNA synthetases. The reaction takes place in the presence of glutamine and ATP through an activated phospho-Asp-tRNA(Asn) or phospho-Glu-tRNA(Gln).</text>
</comment>
<comment type="catalytic activity">
    <reaction evidence="1">
        <text>L-glutamyl-tRNA(Gln) + L-glutamine + ATP + H2O = L-glutaminyl-tRNA(Gln) + L-glutamate + ADP + phosphate + H(+)</text>
        <dbReference type="Rhea" id="RHEA:17521"/>
        <dbReference type="Rhea" id="RHEA-COMP:9681"/>
        <dbReference type="Rhea" id="RHEA-COMP:9684"/>
        <dbReference type="ChEBI" id="CHEBI:15377"/>
        <dbReference type="ChEBI" id="CHEBI:15378"/>
        <dbReference type="ChEBI" id="CHEBI:29985"/>
        <dbReference type="ChEBI" id="CHEBI:30616"/>
        <dbReference type="ChEBI" id="CHEBI:43474"/>
        <dbReference type="ChEBI" id="CHEBI:58359"/>
        <dbReference type="ChEBI" id="CHEBI:78520"/>
        <dbReference type="ChEBI" id="CHEBI:78521"/>
        <dbReference type="ChEBI" id="CHEBI:456216"/>
    </reaction>
</comment>
<comment type="catalytic activity">
    <reaction evidence="1">
        <text>L-aspartyl-tRNA(Asn) + L-glutamine + ATP + H2O = L-asparaginyl-tRNA(Asn) + L-glutamate + ADP + phosphate + 2 H(+)</text>
        <dbReference type="Rhea" id="RHEA:14513"/>
        <dbReference type="Rhea" id="RHEA-COMP:9674"/>
        <dbReference type="Rhea" id="RHEA-COMP:9677"/>
        <dbReference type="ChEBI" id="CHEBI:15377"/>
        <dbReference type="ChEBI" id="CHEBI:15378"/>
        <dbReference type="ChEBI" id="CHEBI:29985"/>
        <dbReference type="ChEBI" id="CHEBI:30616"/>
        <dbReference type="ChEBI" id="CHEBI:43474"/>
        <dbReference type="ChEBI" id="CHEBI:58359"/>
        <dbReference type="ChEBI" id="CHEBI:78515"/>
        <dbReference type="ChEBI" id="CHEBI:78516"/>
        <dbReference type="ChEBI" id="CHEBI:456216"/>
    </reaction>
</comment>
<comment type="subunit">
    <text evidence="1">Heterotrimer of A, B and C subunits.</text>
</comment>
<comment type="similarity">
    <text evidence="1">Belongs to the GatB/GatE family. GatB subfamily.</text>
</comment>
<dbReference type="EC" id="6.3.5.-" evidence="1"/>
<dbReference type="EMBL" id="CP000526">
    <property type="protein sequence ID" value="ABM49982.1"/>
    <property type="molecule type" value="Genomic_DNA"/>
</dbReference>
<dbReference type="RefSeq" id="WP_004190092.1">
    <property type="nucleotide sequence ID" value="NC_008785.1"/>
</dbReference>
<dbReference type="SMR" id="A1V775"/>
<dbReference type="GeneID" id="92977943"/>
<dbReference type="KEGG" id="bmv:BMASAVP1_A2782"/>
<dbReference type="HOGENOM" id="CLU_019240_0_0_4"/>
<dbReference type="GO" id="GO:0050566">
    <property type="term" value="F:asparaginyl-tRNA synthase (glutamine-hydrolyzing) activity"/>
    <property type="evidence" value="ECO:0007669"/>
    <property type="project" value="RHEA"/>
</dbReference>
<dbReference type="GO" id="GO:0005524">
    <property type="term" value="F:ATP binding"/>
    <property type="evidence" value="ECO:0007669"/>
    <property type="project" value="UniProtKB-KW"/>
</dbReference>
<dbReference type="GO" id="GO:0050567">
    <property type="term" value="F:glutaminyl-tRNA synthase (glutamine-hydrolyzing) activity"/>
    <property type="evidence" value="ECO:0007669"/>
    <property type="project" value="UniProtKB-UniRule"/>
</dbReference>
<dbReference type="GO" id="GO:0070681">
    <property type="term" value="P:glutaminyl-tRNAGln biosynthesis via transamidation"/>
    <property type="evidence" value="ECO:0007669"/>
    <property type="project" value="TreeGrafter"/>
</dbReference>
<dbReference type="GO" id="GO:0006412">
    <property type="term" value="P:translation"/>
    <property type="evidence" value="ECO:0007669"/>
    <property type="project" value="UniProtKB-UniRule"/>
</dbReference>
<dbReference type="FunFam" id="1.10.10.410:FF:000001">
    <property type="entry name" value="Aspartyl/glutamyl-tRNA(Asn/Gln) amidotransferase subunit B"/>
    <property type="match status" value="1"/>
</dbReference>
<dbReference type="FunFam" id="1.10.150.380:FF:000001">
    <property type="entry name" value="Aspartyl/glutamyl-tRNA(Asn/Gln) amidotransferase subunit B"/>
    <property type="match status" value="1"/>
</dbReference>
<dbReference type="Gene3D" id="1.10.10.410">
    <property type="match status" value="1"/>
</dbReference>
<dbReference type="Gene3D" id="1.10.150.380">
    <property type="entry name" value="GatB domain, N-terminal subdomain"/>
    <property type="match status" value="1"/>
</dbReference>
<dbReference type="HAMAP" id="MF_00121">
    <property type="entry name" value="GatB"/>
    <property type="match status" value="1"/>
</dbReference>
<dbReference type="InterPro" id="IPR017959">
    <property type="entry name" value="Asn/Gln-tRNA_amidoTrfase_suB/E"/>
</dbReference>
<dbReference type="InterPro" id="IPR006075">
    <property type="entry name" value="Asn/Gln-tRNA_Trfase_suB/E_cat"/>
</dbReference>
<dbReference type="InterPro" id="IPR018027">
    <property type="entry name" value="Asn/Gln_amidotransferase"/>
</dbReference>
<dbReference type="InterPro" id="IPR003789">
    <property type="entry name" value="Asn/Gln_tRNA_amidoTrase-B-like"/>
</dbReference>
<dbReference type="InterPro" id="IPR004413">
    <property type="entry name" value="GatB"/>
</dbReference>
<dbReference type="InterPro" id="IPR042114">
    <property type="entry name" value="GatB_C_1"/>
</dbReference>
<dbReference type="InterPro" id="IPR023168">
    <property type="entry name" value="GatB_Yqey_C_2"/>
</dbReference>
<dbReference type="InterPro" id="IPR017958">
    <property type="entry name" value="Gln-tRNA_amidoTrfase_suB_CS"/>
</dbReference>
<dbReference type="InterPro" id="IPR014746">
    <property type="entry name" value="Gln_synth/guanido_kin_cat_dom"/>
</dbReference>
<dbReference type="NCBIfam" id="TIGR00133">
    <property type="entry name" value="gatB"/>
    <property type="match status" value="1"/>
</dbReference>
<dbReference type="NCBIfam" id="NF004012">
    <property type="entry name" value="PRK05477.1-2"/>
    <property type="match status" value="1"/>
</dbReference>
<dbReference type="NCBIfam" id="NF004014">
    <property type="entry name" value="PRK05477.1-4"/>
    <property type="match status" value="1"/>
</dbReference>
<dbReference type="NCBIfam" id="NF004015">
    <property type="entry name" value="PRK05477.1-5"/>
    <property type="match status" value="1"/>
</dbReference>
<dbReference type="PANTHER" id="PTHR11659">
    <property type="entry name" value="GLUTAMYL-TRNA GLN AMIDOTRANSFERASE SUBUNIT B MITOCHONDRIAL AND PROKARYOTIC PET112-RELATED"/>
    <property type="match status" value="1"/>
</dbReference>
<dbReference type="PANTHER" id="PTHR11659:SF0">
    <property type="entry name" value="GLUTAMYL-TRNA(GLN) AMIDOTRANSFERASE SUBUNIT B, MITOCHONDRIAL"/>
    <property type="match status" value="1"/>
</dbReference>
<dbReference type="Pfam" id="PF02934">
    <property type="entry name" value="GatB_N"/>
    <property type="match status" value="1"/>
</dbReference>
<dbReference type="Pfam" id="PF02637">
    <property type="entry name" value="GatB_Yqey"/>
    <property type="match status" value="1"/>
</dbReference>
<dbReference type="SMART" id="SM00845">
    <property type="entry name" value="GatB_Yqey"/>
    <property type="match status" value="1"/>
</dbReference>
<dbReference type="SUPFAM" id="SSF89095">
    <property type="entry name" value="GatB/YqeY motif"/>
    <property type="match status" value="1"/>
</dbReference>
<dbReference type="SUPFAM" id="SSF55931">
    <property type="entry name" value="Glutamine synthetase/guanido kinase"/>
    <property type="match status" value="1"/>
</dbReference>
<dbReference type="PROSITE" id="PS01234">
    <property type="entry name" value="GATB"/>
    <property type="match status" value="1"/>
</dbReference>
<reference key="1">
    <citation type="journal article" date="2010" name="Genome Biol. Evol.">
        <title>Continuing evolution of Burkholderia mallei through genome reduction and large-scale rearrangements.</title>
        <authorList>
            <person name="Losada L."/>
            <person name="Ronning C.M."/>
            <person name="DeShazer D."/>
            <person name="Woods D."/>
            <person name="Fedorova N."/>
            <person name="Kim H.S."/>
            <person name="Shabalina S.A."/>
            <person name="Pearson T.R."/>
            <person name="Brinkac L."/>
            <person name="Tan P."/>
            <person name="Nandi T."/>
            <person name="Crabtree J."/>
            <person name="Badger J."/>
            <person name="Beckstrom-Sternberg S."/>
            <person name="Saqib M."/>
            <person name="Schutzer S.E."/>
            <person name="Keim P."/>
            <person name="Nierman W.C."/>
        </authorList>
    </citation>
    <scope>NUCLEOTIDE SEQUENCE [LARGE SCALE GENOMIC DNA]</scope>
    <source>
        <strain>SAVP1</strain>
    </source>
</reference>
<accession>A1V775</accession>
<name>GATB_BURMS</name>
<gene>
    <name evidence="1" type="primary">gatB</name>
    <name type="ordered locus">BMASAVP1_A2782</name>
</gene>
<protein>
    <recommendedName>
        <fullName evidence="1">Aspartyl/glutamyl-tRNA(Asn/Gln) amidotransferase subunit B</fullName>
        <shortName evidence="1">Asp/Glu-ADT subunit B</shortName>
        <ecNumber evidence="1">6.3.5.-</ecNumber>
    </recommendedName>
</protein>
<feature type="chain" id="PRO_1000015945" description="Aspartyl/glutamyl-tRNA(Asn/Gln) amidotransferase subunit B">
    <location>
        <begin position="1"/>
        <end position="490"/>
    </location>
</feature>
<organism>
    <name type="scientific">Burkholderia mallei (strain SAVP1)</name>
    <dbReference type="NCBI Taxonomy" id="320388"/>
    <lineage>
        <taxon>Bacteria</taxon>
        <taxon>Pseudomonadati</taxon>
        <taxon>Pseudomonadota</taxon>
        <taxon>Betaproteobacteria</taxon>
        <taxon>Burkholderiales</taxon>
        <taxon>Burkholderiaceae</taxon>
        <taxon>Burkholderia</taxon>
        <taxon>pseudomallei group</taxon>
    </lineage>
</organism>